<comment type="function">
    <text evidence="2">Catalyzes the formation of 5-methyl-uridine at position 1939 (m5U1939) in 23S rRNA.</text>
</comment>
<comment type="catalytic activity">
    <reaction evidence="2">
        <text>uridine(1939) in 23S rRNA + S-adenosyl-L-methionine = 5-methyluridine(1939) in 23S rRNA + S-adenosyl-L-homocysteine + H(+)</text>
        <dbReference type="Rhea" id="RHEA:42908"/>
        <dbReference type="Rhea" id="RHEA-COMP:10278"/>
        <dbReference type="Rhea" id="RHEA-COMP:10279"/>
        <dbReference type="ChEBI" id="CHEBI:15378"/>
        <dbReference type="ChEBI" id="CHEBI:57856"/>
        <dbReference type="ChEBI" id="CHEBI:59789"/>
        <dbReference type="ChEBI" id="CHEBI:65315"/>
        <dbReference type="ChEBI" id="CHEBI:74447"/>
        <dbReference type="EC" id="2.1.1.190"/>
    </reaction>
</comment>
<comment type="similarity">
    <text evidence="2">Belongs to the class I-like SAM-binding methyltransferase superfamily. RNA M5U methyltransferase family. RlmD subfamily.</text>
</comment>
<evidence type="ECO:0000250" key="1"/>
<evidence type="ECO:0000255" key="2">
    <source>
        <dbReference type="HAMAP-Rule" id="MF_01010"/>
    </source>
</evidence>
<gene>
    <name evidence="2" type="primary">rlmD</name>
    <name type="synonym">rumA</name>
    <name type="ordered locus">SFV_2672</name>
</gene>
<sequence length="433" mass="48012">MAQFYSAKRRTTTRQIITVSVNDLDSFGQGVARHNGKTLFIPGLLPQENAEVAVTEDKKQYARAKVVRRLSDSPERETPRCPHFGVCGGCQQQHASVDLQQRSKSAALARLMKHDVSEVIADVPWGYRRRARLSLNYLPKTQQLQMGFRKAGSSDIVDVKQCPILAPQLEALLPKVRACLGSLQAMRHLGHVELVQATSGTLMILRHTASLSSADREKLERFSHSEGLDLYLAPDSEILETVSGEMPWYDSNGLRLTFSPRDFIQVNAGVNQKMVARALEWLDVQPEDRVLDLFCGMGNFTLPLATQAASVVGVEGVPALVEKGQQNARLNGLQNVTFYHENLEEDVTKQPWAKNGFDKVLLDPARAGAAGVMQQIIKLEPIRIVYVSCNPATLARDSEALLKAGYTIARLAMLDMFPHTGHLESMVLFSRVK</sequence>
<name>RLMD_SHIF8</name>
<dbReference type="EC" id="2.1.1.190" evidence="2"/>
<dbReference type="EMBL" id="CP000266">
    <property type="protein sequence ID" value="ABF04764.1"/>
    <property type="molecule type" value="Genomic_DNA"/>
</dbReference>
<dbReference type="RefSeq" id="WP_000046799.1">
    <property type="nucleotide sequence ID" value="NC_008258.1"/>
</dbReference>
<dbReference type="SMR" id="Q0T1Q1"/>
<dbReference type="KEGG" id="sfv:SFV_2672"/>
<dbReference type="HOGENOM" id="CLU_014689_8_2_6"/>
<dbReference type="Proteomes" id="UP000000659">
    <property type="component" value="Chromosome"/>
</dbReference>
<dbReference type="GO" id="GO:0051539">
    <property type="term" value="F:4 iron, 4 sulfur cluster binding"/>
    <property type="evidence" value="ECO:0007669"/>
    <property type="project" value="UniProtKB-KW"/>
</dbReference>
<dbReference type="GO" id="GO:0005506">
    <property type="term" value="F:iron ion binding"/>
    <property type="evidence" value="ECO:0007669"/>
    <property type="project" value="UniProtKB-UniRule"/>
</dbReference>
<dbReference type="GO" id="GO:0003723">
    <property type="term" value="F:RNA binding"/>
    <property type="evidence" value="ECO:0007669"/>
    <property type="project" value="InterPro"/>
</dbReference>
<dbReference type="GO" id="GO:0070041">
    <property type="term" value="F:rRNA (uridine-C5-)-methyltransferase activity"/>
    <property type="evidence" value="ECO:0007669"/>
    <property type="project" value="UniProtKB-UniRule"/>
</dbReference>
<dbReference type="GO" id="GO:0070475">
    <property type="term" value="P:rRNA base methylation"/>
    <property type="evidence" value="ECO:0007669"/>
    <property type="project" value="TreeGrafter"/>
</dbReference>
<dbReference type="CDD" id="cd02440">
    <property type="entry name" value="AdoMet_MTases"/>
    <property type="match status" value="1"/>
</dbReference>
<dbReference type="FunFam" id="3.40.50.150:FF:000009">
    <property type="entry name" value="23S rRNA (Uracil(1939)-C(5))-methyltransferase RlmD"/>
    <property type="match status" value="1"/>
</dbReference>
<dbReference type="FunFam" id="2.40.50.1070:FF:000004">
    <property type="entry name" value="23S rRNA (uracil(1939)-C(5))-methyltransferase RlmD"/>
    <property type="match status" value="1"/>
</dbReference>
<dbReference type="FunFam" id="2.40.50.140:FF:000097">
    <property type="entry name" value="23S rRNA (uracil(1939)-C(5))-methyltransferase RlmD"/>
    <property type="match status" value="1"/>
</dbReference>
<dbReference type="Gene3D" id="2.40.50.1070">
    <property type="match status" value="1"/>
</dbReference>
<dbReference type="Gene3D" id="2.40.50.140">
    <property type="entry name" value="Nucleic acid-binding proteins"/>
    <property type="match status" value="1"/>
</dbReference>
<dbReference type="Gene3D" id="3.40.50.150">
    <property type="entry name" value="Vaccinia Virus protein VP39"/>
    <property type="match status" value="1"/>
</dbReference>
<dbReference type="HAMAP" id="MF_01010">
    <property type="entry name" value="23SrRNA_methyltr_RlmD"/>
    <property type="match status" value="1"/>
</dbReference>
<dbReference type="InterPro" id="IPR001566">
    <property type="entry name" value="23S_rRNA_MeTrfase_RlmD"/>
</dbReference>
<dbReference type="InterPro" id="IPR030390">
    <property type="entry name" value="MeTrfase_TrmA_AS"/>
</dbReference>
<dbReference type="InterPro" id="IPR030391">
    <property type="entry name" value="MeTrfase_TrmA_CS"/>
</dbReference>
<dbReference type="InterPro" id="IPR012340">
    <property type="entry name" value="NA-bd_OB-fold"/>
</dbReference>
<dbReference type="InterPro" id="IPR029063">
    <property type="entry name" value="SAM-dependent_MTases_sf"/>
</dbReference>
<dbReference type="InterPro" id="IPR002792">
    <property type="entry name" value="TRAM_dom"/>
</dbReference>
<dbReference type="InterPro" id="IPR010280">
    <property type="entry name" value="U5_MeTrfase_fam"/>
</dbReference>
<dbReference type="NCBIfam" id="NF009639">
    <property type="entry name" value="PRK13168.1"/>
    <property type="match status" value="1"/>
</dbReference>
<dbReference type="NCBIfam" id="TIGR00479">
    <property type="entry name" value="rumA"/>
    <property type="match status" value="1"/>
</dbReference>
<dbReference type="PANTHER" id="PTHR11061:SF49">
    <property type="entry name" value="23S RRNA (URACIL(1939)-C(5))-METHYLTRANSFERASE RLMD"/>
    <property type="match status" value="1"/>
</dbReference>
<dbReference type="PANTHER" id="PTHR11061">
    <property type="entry name" value="RNA M5U METHYLTRANSFERASE"/>
    <property type="match status" value="1"/>
</dbReference>
<dbReference type="Pfam" id="PF01938">
    <property type="entry name" value="TRAM"/>
    <property type="match status" value="1"/>
</dbReference>
<dbReference type="Pfam" id="PF05958">
    <property type="entry name" value="tRNA_U5-meth_tr"/>
    <property type="match status" value="1"/>
</dbReference>
<dbReference type="SUPFAM" id="SSF50249">
    <property type="entry name" value="Nucleic acid-binding proteins"/>
    <property type="match status" value="1"/>
</dbReference>
<dbReference type="SUPFAM" id="SSF53335">
    <property type="entry name" value="S-adenosyl-L-methionine-dependent methyltransferases"/>
    <property type="match status" value="1"/>
</dbReference>
<dbReference type="PROSITE" id="PS51687">
    <property type="entry name" value="SAM_MT_RNA_M5U"/>
    <property type="match status" value="1"/>
</dbReference>
<dbReference type="PROSITE" id="PS50926">
    <property type="entry name" value="TRAM"/>
    <property type="match status" value="1"/>
</dbReference>
<dbReference type="PROSITE" id="PS01230">
    <property type="entry name" value="TRMA_1"/>
    <property type="match status" value="1"/>
</dbReference>
<dbReference type="PROSITE" id="PS01231">
    <property type="entry name" value="TRMA_2"/>
    <property type="match status" value="1"/>
</dbReference>
<keyword id="KW-0004">4Fe-4S</keyword>
<keyword id="KW-0408">Iron</keyword>
<keyword id="KW-0411">Iron-sulfur</keyword>
<keyword id="KW-0479">Metal-binding</keyword>
<keyword id="KW-0489">Methyltransferase</keyword>
<keyword id="KW-0698">rRNA processing</keyword>
<keyword id="KW-0949">S-adenosyl-L-methionine</keyword>
<keyword id="KW-0808">Transferase</keyword>
<organism>
    <name type="scientific">Shigella flexneri serotype 5b (strain 8401)</name>
    <dbReference type="NCBI Taxonomy" id="373384"/>
    <lineage>
        <taxon>Bacteria</taxon>
        <taxon>Pseudomonadati</taxon>
        <taxon>Pseudomonadota</taxon>
        <taxon>Gammaproteobacteria</taxon>
        <taxon>Enterobacterales</taxon>
        <taxon>Enterobacteriaceae</taxon>
        <taxon>Shigella</taxon>
    </lineage>
</organism>
<protein>
    <recommendedName>
        <fullName evidence="2">23S rRNA (uracil(1939)-C(5))-methyltransferase RlmD</fullName>
        <ecNumber evidence="2">2.1.1.190</ecNumber>
    </recommendedName>
    <alternativeName>
        <fullName evidence="2">23S rRNA(m5U1939)-methyltransferase</fullName>
    </alternativeName>
</protein>
<feature type="initiator methionine" description="Removed" evidence="1">
    <location>
        <position position="1"/>
    </location>
</feature>
<feature type="chain" id="PRO_0000282067" description="23S rRNA (uracil(1939)-C(5))-methyltransferase RlmD">
    <location>
        <begin position="2"/>
        <end position="433"/>
    </location>
</feature>
<feature type="domain" description="TRAM" evidence="2">
    <location>
        <begin position="10"/>
        <end position="68"/>
    </location>
</feature>
<feature type="active site" description="Nucleophile" evidence="2">
    <location>
        <position position="389"/>
    </location>
</feature>
<feature type="binding site" evidence="2">
    <location>
        <position position="81"/>
    </location>
    <ligand>
        <name>[4Fe-4S] cluster</name>
        <dbReference type="ChEBI" id="CHEBI:49883"/>
    </ligand>
</feature>
<feature type="binding site" evidence="2">
    <location>
        <position position="87"/>
    </location>
    <ligand>
        <name>[4Fe-4S] cluster</name>
        <dbReference type="ChEBI" id="CHEBI:49883"/>
    </ligand>
</feature>
<feature type="binding site" evidence="2">
    <location>
        <position position="90"/>
    </location>
    <ligand>
        <name>[4Fe-4S] cluster</name>
        <dbReference type="ChEBI" id="CHEBI:49883"/>
    </ligand>
</feature>
<feature type="binding site" evidence="2">
    <location>
        <position position="162"/>
    </location>
    <ligand>
        <name>[4Fe-4S] cluster</name>
        <dbReference type="ChEBI" id="CHEBI:49883"/>
    </ligand>
</feature>
<feature type="binding site" evidence="2">
    <location>
        <position position="265"/>
    </location>
    <ligand>
        <name>S-adenosyl-L-methionine</name>
        <dbReference type="ChEBI" id="CHEBI:59789"/>
    </ligand>
</feature>
<feature type="binding site" evidence="2">
    <location>
        <position position="294"/>
    </location>
    <ligand>
        <name>S-adenosyl-L-methionine</name>
        <dbReference type="ChEBI" id="CHEBI:59789"/>
    </ligand>
</feature>
<feature type="binding site" evidence="2">
    <location>
        <position position="299"/>
    </location>
    <ligand>
        <name>S-adenosyl-L-methionine</name>
        <dbReference type="ChEBI" id="CHEBI:59789"/>
    </ligand>
</feature>
<feature type="binding site" evidence="2">
    <location>
        <position position="315"/>
    </location>
    <ligand>
        <name>S-adenosyl-L-methionine</name>
        <dbReference type="ChEBI" id="CHEBI:59789"/>
    </ligand>
</feature>
<feature type="binding site" evidence="2">
    <location>
        <position position="342"/>
    </location>
    <ligand>
        <name>S-adenosyl-L-methionine</name>
        <dbReference type="ChEBI" id="CHEBI:59789"/>
    </ligand>
</feature>
<feature type="binding site" evidence="2">
    <location>
        <position position="363"/>
    </location>
    <ligand>
        <name>S-adenosyl-L-methionine</name>
        <dbReference type="ChEBI" id="CHEBI:59789"/>
    </ligand>
</feature>
<accession>Q0T1Q1</accession>
<proteinExistence type="inferred from homology"/>
<reference key="1">
    <citation type="journal article" date="2006" name="BMC Genomics">
        <title>Complete genome sequence of Shigella flexneri 5b and comparison with Shigella flexneri 2a.</title>
        <authorList>
            <person name="Nie H."/>
            <person name="Yang F."/>
            <person name="Zhang X."/>
            <person name="Yang J."/>
            <person name="Chen L."/>
            <person name="Wang J."/>
            <person name="Xiong Z."/>
            <person name="Peng J."/>
            <person name="Sun L."/>
            <person name="Dong J."/>
            <person name="Xue Y."/>
            <person name="Xu X."/>
            <person name="Chen S."/>
            <person name="Yao Z."/>
            <person name="Shen Y."/>
            <person name="Jin Q."/>
        </authorList>
    </citation>
    <scope>NUCLEOTIDE SEQUENCE [LARGE SCALE GENOMIC DNA]</scope>
    <source>
        <strain>8401</strain>
    </source>
</reference>